<organism>
    <name type="scientific">Bacillus subtilis (strain 168)</name>
    <dbReference type="NCBI Taxonomy" id="224308"/>
    <lineage>
        <taxon>Bacteria</taxon>
        <taxon>Bacillati</taxon>
        <taxon>Bacillota</taxon>
        <taxon>Bacilli</taxon>
        <taxon>Bacillales</taxon>
        <taxon>Bacillaceae</taxon>
        <taxon>Bacillus</taxon>
    </lineage>
</organism>
<protein>
    <recommendedName>
        <fullName>Spore coat protein M</fullName>
    </recommendedName>
</protein>
<comment type="function">
    <text>Involved in spore outer coat assembly. May be part of a cross-linked insoluble skeleton that surrounds the spore, serves as a matrix for the assembly of additional outer coat material, and confers structural stability to the final structure.</text>
</comment>
<comment type="induction">
    <text>Induced during development under sigma-K control and negatively regulated by GerE.</text>
</comment>
<comment type="sequence caution" evidence="1">
    <conflict type="erroneous initiation">
        <sequence resource="EMBL-CDS" id="AAC44989"/>
    </conflict>
</comment>
<keyword id="KW-1185">Reference proteome</keyword>
<keyword id="KW-0749">Sporulation</keyword>
<reference key="1">
    <citation type="journal article" date="1997" name="J. Bacteriol.">
        <title>CotM of Bacillus subtilis, a member of the alpha-crystallin family of stress proteins, is induced during development and participates in spore outer coat formation.</title>
        <authorList>
            <person name="Henriques A.O."/>
            <person name="Beall B.W."/>
            <person name="Moran C.P. Jr."/>
        </authorList>
    </citation>
    <scope>NUCLEOTIDE SEQUENCE [GENOMIC DNA]</scope>
    <source>
        <strain>168</strain>
    </source>
</reference>
<reference key="2">
    <citation type="journal article" date="1996" name="Microbiology">
        <title>New genes in the 170 degrees region of the Bacillus subtilis genome encode DNA gyrase subunits, a thioredoxin, a xylanase and an amino acid transporter.</title>
        <authorList>
            <person name="Rose M."/>
            <person name="Entian K.-D."/>
        </authorList>
    </citation>
    <scope>NUCLEOTIDE SEQUENCE [GENOMIC DNA]</scope>
    <source>
        <strain>168</strain>
    </source>
</reference>
<reference key="3">
    <citation type="journal article" date="1997" name="Nature">
        <title>The complete genome sequence of the Gram-positive bacterium Bacillus subtilis.</title>
        <authorList>
            <person name="Kunst F."/>
            <person name="Ogasawara N."/>
            <person name="Moszer I."/>
            <person name="Albertini A.M."/>
            <person name="Alloni G."/>
            <person name="Azevedo V."/>
            <person name="Bertero M.G."/>
            <person name="Bessieres P."/>
            <person name="Bolotin A."/>
            <person name="Borchert S."/>
            <person name="Borriss R."/>
            <person name="Boursier L."/>
            <person name="Brans A."/>
            <person name="Braun M."/>
            <person name="Brignell S.C."/>
            <person name="Bron S."/>
            <person name="Brouillet S."/>
            <person name="Bruschi C.V."/>
            <person name="Caldwell B."/>
            <person name="Capuano V."/>
            <person name="Carter N.M."/>
            <person name="Choi S.-K."/>
            <person name="Codani J.-J."/>
            <person name="Connerton I.F."/>
            <person name="Cummings N.J."/>
            <person name="Daniel R.A."/>
            <person name="Denizot F."/>
            <person name="Devine K.M."/>
            <person name="Duesterhoeft A."/>
            <person name="Ehrlich S.D."/>
            <person name="Emmerson P.T."/>
            <person name="Entian K.-D."/>
            <person name="Errington J."/>
            <person name="Fabret C."/>
            <person name="Ferrari E."/>
            <person name="Foulger D."/>
            <person name="Fritz C."/>
            <person name="Fujita M."/>
            <person name="Fujita Y."/>
            <person name="Fuma S."/>
            <person name="Galizzi A."/>
            <person name="Galleron N."/>
            <person name="Ghim S.-Y."/>
            <person name="Glaser P."/>
            <person name="Goffeau A."/>
            <person name="Golightly E.J."/>
            <person name="Grandi G."/>
            <person name="Guiseppi G."/>
            <person name="Guy B.J."/>
            <person name="Haga K."/>
            <person name="Haiech J."/>
            <person name="Harwood C.R."/>
            <person name="Henaut A."/>
            <person name="Hilbert H."/>
            <person name="Holsappel S."/>
            <person name="Hosono S."/>
            <person name="Hullo M.-F."/>
            <person name="Itaya M."/>
            <person name="Jones L.-M."/>
            <person name="Joris B."/>
            <person name="Karamata D."/>
            <person name="Kasahara Y."/>
            <person name="Klaerr-Blanchard M."/>
            <person name="Klein C."/>
            <person name="Kobayashi Y."/>
            <person name="Koetter P."/>
            <person name="Koningstein G."/>
            <person name="Krogh S."/>
            <person name="Kumano M."/>
            <person name="Kurita K."/>
            <person name="Lapidus A."/>
            <person name="Lardinois S."/>
            <person name="Lauber J."/>
            <person name="Lazarevic V."/>
            <person name="Lee S.-M."/>
            <person name="Levine A."/>
            <person name="Liu H."/>
            <person name="Masuda S."/>
            <person name="Mauel C."/>
            <person name="Medigue C."/>
            <person name="Medina N."/>
            <person name="Mellado R.P."/>
            <person name="Mizuno M."/>
            <person name="Moestl D."/>
            <person name="Nakai S."/>
            <person name="Noback M."/>
            <person name="Noone D."/>
            <person name="O'Reilly M."/>
            <person name="Ogawa K."/>
            <person name="Ogiwara A."/>
            <person name="Oudega B."/>
            <person name="Park S.-H."/>
            <person name="Parro V."/>
            <person name="Pohl T.M."/>
            <person name="Portetelle D."/>
            <person name="Porwollik S."/>
            <person name="Prescott A.M."/>
            <person name="Presecan E."/>
            <person name="Pujic P."/>
            <person name="Purnelle B."/>
            <person name="Rapoport G."/>
            <person name="Rey M."/>
            <person name="Reynolds S."/>
            <person name="Rieger M."/>
            <person name="Rivolta C."/>
            <person name="Rocha E."/>
            <person name="Roche B."/>
            <person name="Rose M."/>
            <person name="Sadaie Y."/>
            <person name="Sato T."/>
            <person name="Scanlan E."/>
            <person name="Schleich S."/>
            <person name="Schroeter R."/>
            <person name="Scoffone F."/>
            <person name="Sekiguchi J."/>
            <person name="Sekowska A."/>
            <person name="Seror S.J."/>
            <person name="Serror P."/>
            <person name="Shin B.-S."/>
            <person name="Soldo B."/>
            <person name="Sorokin A."/>
            <person name="Tacconi E."/>
            <person name="Takagi T."/>
            <person name="Takahashi H."/>
            <person name="Takemaru K."/>
            <person name="Takeuchi M."/>
            <person name="Tamakoshi A."/>
            <person name="Tanaka T."/>
            <person name="Terpstra P."/>
            <person name="Tognoni A."/>
            <person name="Tosato V."/>
            <person name="Uchiyama S."/>
            <person name="Vandenbol M."/>
            <person name="Vannier F."/>
            <person name="Vassarotti A."/>
            <person name="Viari A."/>
            <person name="Wambutt R."/>
            <person name="Wedler E."/>
            <person name="Wedler H."/>
            <person name="Weitzenegger T."/>
            <person name="Winters P."/>
            <person name="Wipat A."/>
            <person name="Yamamoto H."/>
            <person name="Yamane K."/>
            <person name="Yasumoto K."/>
            <person name="Yata K."/>
            <person name="Yoshida K."/>
            <person name="Yoshikawa H.-F."/>
            <person name="Zumstein E."/>
            <person name="Yoshikawa H."/>
            <person name="Danchin A."/>
        </authorList>
    </citation>
    <scope>NUCLEOTIDE SEQUENCE [LARGE SCALE GENOMIC DNA]</scope>
    <source>
        <strain>168</strain>
    </source>
</reference>
<gene>
    <name type="primary">cotM</name>
    <name type="synonym">yneL</name>
    <name type="ordered locus">BSU17970</name>
</gene>
<proteinExistence type="evidence at transcript level"/>
<name>COTM_BACSU</name>
<accession>Q45058</accession>
<accession>P71033</accession>
<evidence type="ECO:0000305" key="1"/>
<feature type="chain" id="PRO_0000079267" description="Spore coat protein M">
    <location>
        <begin position="1"/>
        <end position="130"/>
    </location>
</feature>
<sequence length="130" mass="15222">MWRNASMNHSKRNDANDFDSMDEWLRQFFEDPFAWYDETLPIDLYETSQQYIIEADLTFLQPTQVTVTLSGCEFILTVKSSGQTFEKQMMLPFYFNDKNIQVECENQILTVAVNKETEDGSSFSLQFPLS</sequence>
<dbReference type="EMBL" id="U72073">
    <property type="protein sequence ID" value="AAC44989.1"/>
    <property type="status" value="ALT_INIT"/>
    <property type="molecule type" value="Genomic_DNA"/>
</dbReference>
<dbReference type="EMBL" id="Z73234">
    <property type="protein sequence ID" value="CAA97598.1"/>
    <property type="molecule type" value="Genomic_DNA"/>
</dbReference>
<dbReference type="EMBL" id="AL009126">
    <property type="protein sequence ID" value="CAB13681.1"/>
    <property type="molecule type" value="Genomic_DNA"/>
</dbReference>
<dbReference type="PIR" id="C69606">
    <property type="entry name" value="C69606"/>
</dbReference>
<dbReference type="RefSeq" id="NP_389680.1">
    <property type="nucleotide sequence ID" value="NC_000964.3"/>
</dbReference>
<dbReference type="RefSeq" id="WP_010886520.1">
    <property type="nucleotide sequence ID" value="NZ_OZ025638.1"/>
</dbReference>
<dbReference type="SMR" id="Q45058"/>
<dbReference type="FunCoup" id="Q45058">
    <property type="interactions" value="35"/>
</dbReference>
<dbReference type="STRING" id="224308.BSU17970"/>
<dbReference type="PaxDb" id="224308-BSU17970"/>
<dbReference type="EnsemblBacteria" id="CAB13681">
    <property type="protein sequence ID" value="CAB13681"/>
    <property type="gene ID" value="BSU_17970"/>
</dbReference>
<dbReference type="GeneID" id="938815"/>
<dbReference type="KEGG" id="bsu:BSU17970"/>
<dbReference type="PATRIC" id="fig|224308.43.peg.1903"/>
<dbReference type="eggNOG" id="COG0071">
    <property type="taxonomic scope" value="Bacteria"/>
</dbReference>
<dbReference type="InParanoid" id="Q45058"/>
<dbReference type="OrthoDB" id="2942082at2"/>
<dbReference type="BioCyc" id="BSUB:BSU17970-MONOMER"/>
<dbReference type="Proteomes" id="UP000001570">
    <property type="component" value="Chromosome"/>
</dbReference>
<dbReference type="GO" id="GO:0051082">
    <property type="term" value="F:unfolded protein binding"/>
    <property type="evidence" value="ECO:0000318"/>
    <property type="project" value="GO_Central"/>
</dbReference>
<dbReference type="GO" id="GO:0051259">
    <property type="term" value="P:protein complex oligomerization"/>
    <property type="evidence" value="ECO:0000318"/>
    <property type="project" value="GO_Central"/>
</dbReference>
<dbReference type="GO" id="GO:0006457">
    <property type="term" value="P:protein folding"/>
    <property type="evidence" value="ECO:0000318"/>
    <property type="project" value="GO_Central"/>
</dbReference>
<dbReference type="GO" id="GO:0009408">
    <property type="term" value="P:response to heat"/>
    <property type="evidence" value="ECO:0000318"/>
    <property type="project" value="GO_Central"/>
</dbReference>
<dbReference type="GO" id="GO:0042542">
    <property type="term" value="P:response to hydrogen peroxide"/>
    <property type="evidence" value="ECO:0000318"/>
    <property type="project" value="GO_Central"/>
</dbReference>
<dbReference type="GO" id="GO:0009651">
    <property type="term" value="P:response to salt stress"/>
    <property type="evidence" value="ECO:0000318"/>
    <property type="project" value="GO_Central"/>
</dbReference>
<dbReference type="GO" id="GO:0030435">
    <property type="term" value="P:sporulation resulting in formation of a cellular spore"/>
    <property type="evidence" value="ECO:0007669"/>
    <property type="project" value="UniProtKB-KW"/>
</dbReference>
<dbReference type="CDD" id="cd06464">
    <property type="entry name" value="ACD_sHsps-like"/>
    <property type="match status" value="1"/>
</dbReference>
<dbReference type="Gene3D" id="2.60.40.790">
    <property type="match status" value="1"/>
</dbReference>
<dbReference type="InterPro" id="IPR008978">
    <property type="entry name" value="HSP20-like_chaperone"/>
</dbReference>
<dbReference type="SUPFAM" id="SSF49764">
    <property type="entry name" value="HSP20-like chaperones"/>
    <property type="match status" value="1"/>
</dbReference>